<keyword id="KW-1064">Adaptive immunity</keyword>
<keyword id="KW-0053">Apoptosis</keyword>
<keyword id="KW-1003">Cell membrane</keyword>
<keyword id="KW-1015">Disulfide bond</keyword>
<keyword id="KW-0325">Glycoprotein</keyword>
<keyword id="KW-0391">Immunity</keyword>
<keyword id="KW-0449">Lipoprotein</keyword>
<keyword id="KW-0472">Membrane</keyword>
<keyword id="KW-0558">Oxidation</keyword>
<keyword id="KW-0564">Palmitate</keyword>
<keyword id="KW-0675">Receptor</keyword>
<keyword id="KW-1185">Reference proteome</keyword>
<keyword id="KW-0677">Repeat</keyword>
<keyword id="KW-0732">Signal</keyword>
<keyword id="KW-0812">Transmembrane</keyword>
<keyword id="KW-1133">Transmembrane helix</keyword>
<accession>D3ZF92</accession>
<proteinExistence type="evidence at protein level"/>
<organism>
    <name type="scientific">Rattus norvegicus</name>
    <name type="common">Rat</name>
    <dbReference type="NCBI Taxonomy" id="10116"/>
    <lineage>
        <taxon>Eukaryota</taxon>
        <taxon>Metazoa</taxon>
        <taxon>Chordata</taxon>
        <taxon>Craniata</taxon>
        <taxon>Vertebrata</taxon>
        <taxon>Euteleostomi</taxon>
        <taxon>Mammalia</taxon>
        <taxon>Eutheria</taxon>
        <taxon>Euarchontoglires</taxon>
        <taxon>Glires</taxon>
        <taxon>Rodentia</taxon>
        <taxon>Myomorpha</taxon>
        <taxon>Muroidea</taxon>
        <taxon>Muridae</taxon>
        <taxon>Murinae</taxon>
        <taxon>Rattus</taxon>
    </lineage>
</organism>
<comment type="function">
    <text evidence="2 7">Promotes apoptosis, possibly via a pathway that involves the activation of NF-kappa-B (By similarity). Can also promote apoptosis mediated by BAX and by the release of cytochrome c from the mitochondria into the cytoplasm (By similarity). Trophic-factor deprivation triggers the cleavage of surface APP by beta-secretase to release sAPP-beta which is further cleaved to release an N-terminal fragment of APP (N-APP) (By similarity). Negatively regulates oligodendrocyte survival, maturation and myelination (PubMed:21725297). Plays a role in signaling cascades triggered by stimulation of T-cell receptors, in the adaptive immune response and in the regulation of T-cell differentiation and proliferation (By similarity). Negatively regulates T-cell responses and the release of cytokines such as IL4, IL5, IL10, IL13 and IFNG by Th2 cells (By similarity). Negatively regulates the production of IgG, IgM and IgM in response to antigens (By similarity). May inhibit the activation of JNK in response to T-cell stimulation (By similarity). Also acts as a regulator of pyroptosis: recruits CASP8 in response to reactive oxygen species (ROS) and subsequent oxidation, leading to activation of GSDMC (By similarity).</text>
</comment>
<comment type="subunit">
    <text evidence="2">Associates with TRADD. Interacts with NGFR. Interacts with CASP8 (By similarity).</text>
</comment>
<comment type="subcellular location">
    <subcellularLocation>
        <location evidence="2">Cell membrane</location>
        <topology evidence="2">Single-pass type I membrane protein</topology>
    </subcellularLocation>
    <text evidence="2">Endocytosed following oxidation in response to reactive oxygen species (ROS).</text>
</comment>
<comment type="tissue specificity">
    <text evidence="7">Detected in brain (at protein level). Detected in corpus callosum oligodendrocytes. Detected in embryonic and adult brain.</text>
</comment>
<comment type="developmental stage">
    <text evidence="7">Detected at low levels in embryonic brain. Expression is increased in newborns and during the first two weeks after birth. Expression decreases thereafter and is low after three weeks and in adult life.</text>
</comment>
<comment type="PTM">
    <text evidence="2">Oxidized in response to reactive oxygen species (ROS), leading to endocytosis.</text>
</comment>
<feature type="signal peptide" evidence="3">
    <location>
        <begin position="1"/>
        <end position="41"/>
    </location>
</feature>
<feature type="chain" id="PRO_0000425729" description="Tumor necrosis factor receptor superfamily member 21">
    <location>
        <begin position="42"/>
        <end position="655"/>
    </location>
</feature>
<feature type="topological domain" description="Extracellular" evidence="3">
    <location>
        <begin position="42"/>
        <end position="349"/>
    </location>
</feature>
<feature type="transmembrane region" description="Helical" evidence="3">
    <location>
        <begin position="350"/>
        <end position="370"/>
    </location>
</feature>
<feature type="topological domain" description="Cytoplasmic" evidence="3">
    <location>
        <begin position="371"/>
        <end position="655"/>
    </location>
</feature>
<feature type="repeat" description="TNFR-Cys 1">
    <location>
        <begin position="50"/>
        <end position="88"/>
    </location>
</feature>
<feature type="repeat" description="TNFR-Cys 2">
    <location>
        <begin position="90"/>
        <end position="131"/>
    </location>
</feature>
<feature type="repeat" description="TNFR-Cys 3">
    <location>
        <begin position="133"/>
        <end position="167"/>
    </location>
</feature>
<feature type="repeat" description="TNFR-Cys 4">
    <location>
        <begin position="170"/>
        <end position="211"/>
    </location>
</feature>
<feature type="domain" description="Death" evidence="4">
    <location>
        <begin position="415"/>
        <end position="498"/>
    </location>
</feature>
<feature type="region of interest" description="Disordered" evidence="6">
    <location>
        <begin position="214"/>
        <end position="306"/>
    </location>
</feature>
<feature type="region of interest" description="Disordered" evidence="6">
    <location>
        <begin position="318"/>
        <end position="338"/>
    </location>
</feature>
<feature type="compositionally biased region" description="Low complexity" evidence="6">
    <location>
        <begin position="216"/>
        <end position="225"/>
    </location>
</feature>
<feature type="compositionally biased region" description="Polar residues" evidence="6">
    <location>
        <begin position="241"/>
        <end position="262"/>
    </location>
</feature>
<feature type="compositionally biased region" description="Polar residues" evidence="6">
    <location>
        <begin position="276"/>
        <end position="302"/>
    </location>
</feature>
<feature type="lipid moiety-binding region" description="S-palmitoyl cysteine" evidence="1">
    <location>
        <position position="368"/>
    </location>
</feature>
<feature type="glycosylation site" description="N-linked (GlcNAc...) asparagine" evidence="3">
    <location>
        <position position="82"/>
    </location>
</feature>
<feature type="glycosylation site" description="N-linked (GlcNAc...) asparagine" evidence="3">
    <location>
        <position position="252"/>
    </location>
</feature>
<feature type="glycosylation site" description="N-linked (GlcNAc...) asparagine" evidence="3">
    <location>
        <position position="278"/>
    </location>
</feature>
<feature type="glycosylation site" description="N-linked (GlcNAc...) asparagine" evidence="3">
    <location>
        <position position="289"/>
    </location>
</feature>
<feature type="disulfide bond" evidence="5">
    <location>
        <begin position="67"/>
        <end position="80"/>
    </location>
</feature>
<feature type="disulfide bond" evidence="5">
    <location>
        <begin position="70"/>
        <end position="88"/>
    </location>
</feature>
<feature type="disulfide bond" evidence="5">
    <location>
        <begin position="91"/>
        <end position="106"/>
    </location>
</feature>
<feature type="disulfide bond" evidence="5">
    <location>
        <begin position="109"/>
        <end position="123"/>
    </location>
</feature>
<feature type="disulfide bond" evidence="5">
    <location>
        <begin position="113"/>
        <end position="131"/>
    </location>
</feature>
<feature type="disulfide bond" evidence="5">
    <location>
        <begin position="133"/>
        <end position="144"/>
    </location>
</feature>
<feature type="disulfide bond" evidence="5">
    <location>
        <begin position="150"/>
        <end position="168"/>
    </location>
</feature>
<feature type="disulfide bond" evidence="5">
    <location>
        <begin position="171"/>
        <end position="186"/>
    </location>
</feature>
<feature type="disulfide bond" evidence="5">
    <location>
        <begin position="192"/>
        <end position="211"/>
    </location>
</feature>
<sequence>MGTSASSITALASCSRIAGQVGATMVAGSLLLLGFLSTITAQPEQKTLSLTGTYRHVDRTTGQVLTCDKCPAGTYVSEHCTNTSLRVCSSCPSGTFTRHENGIERCHDCSQPCPRPMIERLPCAALTDRECICPPGMYQSNGTCAPHTVCPVGWGVRKKGTENEDVRCKQCARGTFSDVPSSVMKCRAHTDCLGQNLMVVKQGTKETDNVCGVHLSSSSTTPSSPGIATFSHPEHTESHDVPSSTYEPQGMNSTDSNSTASVRTKVPSDIQEETVPDNTSSTSGKESTNRTLPNPPQLTHQQGPHHRHILKLLPSSMEATGEKSSTAIKAPKRGHPRQNPHKHFDINEHLPWMIVLFLLLVLVLIVVCSIRKSSRTLKKGPRQDPSAIMEKAGLKKSLTPTQNREKWIYYRNGHGIDILKLVAAQVGSQWKDIYQFLCNASEREVAAFSNGYTADHERAYAALQHWTIRGPEASLAQLISALRQHRRNDVVEKIRGLMEDTTQLETDKLALPMSPSPLSPSPIPSPNVKLENSTLLTVEPSPLDKNKGFFVDESEPLLRCDSTSSGSSALSRNGSFITKEKKDTVLRQVRLDPCDLQPIFDDMLHILNPEELRVIEEIPQAEDKLDRLFEIIGVKSQEASQTLLDSVYSHLPDLL</sequence>
<evidence type="ECO:0000250" key="1"/>
<evidence type="ECO:0000250" key="2">
    <source>
        <dbReference type="UniProtKB" id="O75509"/>
    </source>
</evidence>
<evidence type="ECO:0000255" key="3"/>
<evidence type="ECO:0000255" key="4">
    <source>
        <dbReference type="PROSITE-ProRule" id="PRU00064"/>
    </source>
</evidence>
<evidence type="ECO:0000255" key="5">
    <source>
        <dbReference type="PROSITE-ProRule" id="PRU00206"/>
    </source>
</evidence>
<evidence type="ECO:0000256" key="6">
    <source>
        <dbReference type="SAM" id="MobiDB-lite"/>
    </source>
</evidence>
<evidence type="ECO:0000269" key="7">
    <source>
    </source>
</evidence>
<gene>
    <name type="primary">Tnfrsf21</name>
    <name type="synonym">Dr6</name>
</gene>
<protein>
    <recommendedName>
        <fullName>Tumor necrosis factor receptor superfamily member 21</fullName>
    </recommendedName>
    <alternativeName>
        <fullName>Death receptor 6</fullName>
    </alternativeName>
    <cdAntigenName>CD358</cdAntigenName>
</protein>
<dbReference type="EMBL" id="AABR06058936">
    <property type="status" value="NOT_ANNOTATED_CDS"/>
    <property type="molecule type" value="Genomic_DNA"/>
</dbReference>
<dbReference type="EMBL" id="AABR06058937">
    <property type="status" value="NOT_ANNOTATED_CDS"/>
    <property type="molecule type" value="Genomic_DNA"/>
</dbReference>
<dbReference type="EMBL" id="CH473987">
    <property type="protein sequence ID" value="EDM18686.1"/>
    <property type="molecule type" value="Genomic_DNA"/>
</dbReference>
<dbReference type="RefSeq" id="NP_001101677.1">
    <property type="nucleotide sequence ID" value="NM_001108207.1"/>
</dbReference>
<dbReference type="SMR" id="D3ZF92"/>
<dbReference type="FunCoup" id="D3ZF92">
    <property type="interactions" value="1417"/>
</dbReference>
<dbReference type="STRING" id="10116.ENSRNOP00000015918"/>
<dbReference type="GlyCosmos" id="D3ZF92">
    <property type="glycosylation" value="4 sites, No reported glycans"/>
</dbReference>
<dbReference type="GlyGen" id="D3ZF92">
    <property type="glycosylation" value="4 sites"/>
</dbReference>
<dbReference type="PhosphoSitePlus" id="D3ZF92"/>
<dbReference type="PaxDb" id="10116-ENSRNOP00000015918"/>
<dbReference type="Ensembl" id="ENSRNOT00000015918.6">
    <property type="protein sequence ID" value="ENSRNOP00000015918.5"/>
    <property type="gene ID" value="ENSRNOG00000011517.6"/>
</dbReference>
<dbReference type="GeneID" id="316256"/>
<dbReference type="KEGG" id="rno:316256"/>
<dbReference type="UCSC" id="RGD:1307308">
    <property type="organism name" value="rat"/>
</dbReference>
<dbReference type="AGR" id="RGD:1307308"/>
<dbReference type="CTD" id="27242"/>
<dbReference type="RGD" id="1307308">
    <property type="gene designation" value="Tnfrsf21"/>
</dbReference>
<dbReference type="eggNOG" id="ENOG502QVMX">
    <property type="taxonomic scope" value="Eukaryota"/>
</dbReference>
<dbReference type="GeneTree" id="ENSGT00940000156212"/>
<dbReference type="HOGENOM" id="CLU_027496_0_0_1"/>
<dbReference type="InParanoid" id="D3ZF92"/>
<dbReference type="OMA" id="QVGTQWI"/>
<dbReference type="OrthoDB" id="8933063at2759"/>
<dbReference type="PhylomeDB" id="D3ZF92"/>
<dbReference type="TreeFam" id="TF331157"/>
<dbReference type="PRO" id="PR:D3ZF92"/>
<dbReference type="Proteomes" id="UP000002494">
    <property type="component" value="Chromosome 9"/>
</dbReference>
<dbReference type="Proteomes" id="UP000234681">
    <property type="component" value="Chromosome 9"/>
</dbReference>
<dbReference type="Bgee" id="ENSRNOG00000011517">
    <property type="expression patterns" value="Expressed in adult mammalian kidney and 19 other cell types or tissues"/>
</dbReference>
<dbReference type="GO" id="GO:0005886">
    <property type="term" value="C:plasma membrane"/>
    <property type="evidence" value="ECO:0000250"/>
    <property type="project" value="UniProtKB"/>
</dbReference>
<dbReference type="GO" id="GO:0002250">
    <property type="term" value="P:adaptive immune response"/>
    <property type="evidence" value="ECO:0000250"/>
    <property type="project" value="UniProtKB"/>
</dbReference>
<dbReference type="GO" id="GO:0006915">
    <property type="term" value="P:apoptotic process"/>
    <property type="evidence" value="ECO:0000266"/>
    <property type="project" value="RGD"/>
</dbReference>
<dbReference type="GO" id="GO:0007413">
    <property type="term" value="P:axonal fasciculation"/>
    <property type="evidence" value="ECO:0000315"/>
    <property type="project" value="RGD"/>
</dbReference>
<dbReference type="GO" id="GO:0001783">
    <property type="term" value="P:B cell apoptotic process"/>
    <property type="evidence" value="ECO:0000250"/>
    <property type="project" value="UniProtKB"/>
</dbReference>
<dbReference type="GO" id="GO:0071356">
    <property type="term" value="P:cellular response to tumor necrosis factor"/>
    <property type="evidence" value="ECO:0000266"/>
    <property type="project" value="RGD"/>
</dbReference>
<dbReference type="GO" id="GO:0006959">
    <property type="term" value="P:humoral immune response"/>
    <property type="evidence" value="ECO:0000250"/>
    <property type="project" value="UniProtKB"/>
</dbReference>
<dbReference type="GO" id="GO:0042552">
    <property type="term" value="P:myelination"/>
    <property type="evidence" value="ECO:0000250"/>
    <property type="project" value="UniProtKB"/>
</dbReference>
<dbReference type="GO" id="GO:0030889">
    <property type="term" value="P:negative regulation of B cell proliferation"/>
    <property type="evidence" value="ECO:0000250"/>
    <property type="project" value="UniProtKB"/>
</dbReference>
<dbReference type="GO" id="GO:0032693">
    <property type="term" value="P:negative regulation of interleukin-10 production"/>
    <property type="evidence" value="ECO:0000250"/>
    <property type="project" value="UniProtKB"/>
</dbReference>
<dbReference type="GO" id="GO:0032696">
    <property type="term" value="P:negative regulation of interleukin-13 production"/>
    <property type="evidence" value="ECO:0000250"/>
    <property type="project" value="UniProtKB"/>
</dbReference>
<dbReference type="GO" id="GO:0032714">
    <property type="term" value="P:negative regulation of interleukin-5 production"/>
    <property type="evidence" value="ECO:0000250"/>
    <property type="project" value="UniProtKB"/>
</dbReference>
<dbReference type="GO" id="GO:0031642">
    <property type="term" value="P:negative regulation of myelination"/>
    <property type="evidence" value="ECO:0000266"/>
    <property type="project" value="RGD"/>
</dbReference>
<dbReference type="GO" id="GO:0042130">
    <property type="term" value="P:negative regulation of T cell proliferation"/>
    <property type="evidence" value="ECO:0000250"/>
    <property type="project" value="UniProtKB"/>
</dbReference>
<dbReference type="GO" id="GO:0051402">
    <property type="term" value="P:neuron apoptotic process"/>
    <property type="evidence" value="ECO:0000266"/>
    <property type="project" value="RGD"/>
</dbReference>
<dbReference type="GO" id="GO:0097252">
    <property type="term" value="P:oligodendrocyte apoptotic process"/>
    <property type="evidence" value="ECO:0000250"/>
    <property type="project" value="UniProtKB"/>
</dbReference>
<dbReference type="GO" id="GO:0048713">
    <property type="term" value="P:regulation of oligodendrocyte differentiation"/>
    <property type="evidence" value="ECO:0000250"/>
    <property type="project" value="UniProtKB"/>
</dbReference>
<dbReference type="GO" id="GO:0050852">
    <property type="term" value="P:T cell receptor signaling pathway"/>
    <property type="evidence" value="ECO:0000250"/>
    <property type="project" value="UniProtKB"/>
</dbReference>
<dbReference type="CDD" id="cd08778">
    <property type="entry name" value="Death_TNFRSF21"/>
    <property type="match status" value="1"/>
</dbReference>
<dbReference type="CDD" id="cd10583">
    <property type="entry name" value="TNFRSF21"/>
    <property type="match status" value="1"/>
</dbReference>
<dbReference type="FunFam" id="1.10.533.10:FF:000005">
    <property type="entry name" value="Tumor necrosis factor receptor superfamily member 21"/>
    <property type="match status" value="1"/>
</dbReference>
<dbReference type="FunFam" id="2.10.50.10:FF:000010">
    <property type="entry name" value="Tumor necrosis factor receptor superfamily member 21"/>
    <property type="match status" value="1"/>
</dbReference>
<dbReference type="FunFam" id="2.10.50.10:FF:000011">
    <property type="entry name" value="Tumor necrosis factor receptor superfamily member 21"/>
    <property type="match status" value="1"/>
</dbReference>
<dbReference type="FunFam" id="1.10.533.10:FF:000009">
    <property type="entry name" value="tumor necrosis factor receptor superfamily member 21"/>
    <property type="match status" value="1"/>
</dbReference>
<dbReference type="Gene3D" id="1.10.533.10">
    <property type="entry name" value="Death Domain, Fas"/>
    <property type="match status" value="2"/>
</dbReference>
<dbReference type="Gene3D" id="2.10.50.10">
    <property type="entry name" value="Tumor Necrosis Factor Receptor, subunit A, domain 2"/>
    <property type="match status" value="2"/>
</dbReference>
<dbReference type="InterPro" id="IPR011029">
    <property type="entry name" value="DEATH-like_dom_sf"/>
</dbReference>
<dbReference type="InterPro" id="IPR000488">
    <property type="entry name" value="Death_dom"/>
</dbReference>
<dbReference type="InterPro" id="IPR001368">
    <property type="entry name" value="TNFR/NGFR_Cys_rich_reg"/>
</dbReference>
<dbReference type="InterPro" id="IPR022330">
    <property type="entry name" value="TNFR_21"/>
</dbReference>
<dbReference type="InterPro" id="IPR034037">
    <property type="entry name" value="TNFRSF21_death"/>
</dbReference>
<dbReference type="InterPro" id="IPR034034">
    <property type="entry name" value="TNFRSF21_N"/>
</dbReference>
<dbReference type="PANTHER" id="PTHR46921">
    <property type="entry name" value="TUMOR NECROSIS FACTOR RECEPTOR SUPERFAMILY MEMBER 21"/>
    <property type="match status" value="1"/>
</dbReference>
<dbReference type="PANTHER" id="PTHR46921:SF1">
    <property type="entry name" value="TUMOR NECROSIS FACTOR RECEPTOR SUPERFAMILY MEMBER 21"/>
    <property type="match status" value="1"/>
</dbReference>
<dbReference type="Pfam" id="PF00531">
    <property type="entry name" value="Death"/>
    <property type="match status" value="1"/>
</dbReference>
<dbReference type="Pfam" id="PF00020">
    <property type="entry name" value="TNFR_c6"/>
    <property type="match status" value="1"/>
</dbReference>
<dbReference type="PRINTS" id="PR01971">
    <property type="entry name" value="TNFACTORR21"/>
</dbReference>
<dbReference type="SMART" id="SM00005">
    <property type="entry name" value="DEATH"/>
    <property type="match status" value="1"/>
</dbReference>
<dbReference type="SMART" id="SM01411">
    <property type="entry name" value="Ephrin_rec_like"/>
    <property type="match status" value="2"/>
</dbReference>
<dbReference type="SMART" id="SM00208">
    <property type="entry name" value="TNFR"/>
    <property type="match status" value="4"/>
</dbReference>
<dbReference type="SUPFAM" id="SSF47986">
    <property type="entry name" value="DEATH domain"/>
    <property type="match status" value="1"/>
</dbReference>
<dbReference type="SUPFAM" id="SSF57586">
    <property type="entry name" value="TNF receptor-like"/>
    <property type="match status" value="2"/>
</dbReference>
<dbReference type="PROSITE" id="PS50017">
    <property type="entry name" value="DEATH_DOMAIN"/>
    <property type="match status" value="1"/>
</dbReference>
<dbReference type="PROSITE" id="PS00652">
    <property type="entry name" value="TNFR_NGFR_1"/>
    <property type="match status" value="1"/>
</dbReference>
<dbReference type="PROSITE" id="PS50050">
    <property type="entry name" value="TNFR_NGFR_2"/>
    <property type="match status" value="1"/>
</dbReference>
<name>TNR21_RAT</name>
<reference key="1">
    <citation type="journal article" date="2004" name="Nature">
        <title>Genome sequence of the Brown Norway rat yields insights into mammalian evolution.</title>
        <authorList>
            <person name="Gibbs R.A."/>
            <person name="Weinstock G.M."/>
            <person name="Metzker M.L."/>
            <person name="Muzny D.M."/>
            <person name="Sodergren E.J."/>
            <person name="Scherer S."/>
            <person name="Scott G."/>
            <person name="Steffen D."/>
            <person name="Worley K.C."/>
            <person name="Burch P.E."/>
            <person name="Okwuonu G."/>
            <person name="Hines S."/>
            <person name="Lewis L."/>
            <person name="Deramo C."/>
            <person name="Delgado O."/>
            <person name="Dugan-Rocha S."/>
            <person name="Miner G."/>
            <person name="Morgan M."/>
            <person name="Hawes A."/>
            <person name="Gill R."/>
            <person name="Holt R.A."/>
            <person name="Adams M.D."/>
            <person name="Amanatides P.G."/>
            <person name="Baden-Tillson H."/>
            <person name="Barnstead M."/>
            <person name="Chin S."/>
            <person name="Evans C.A."/>
            <person name="Ferriera S."/>
            <person name="Fosler C."/>
            <person name="Glodek A."/>
            <person name="Gu Z."/>
            <person name="Jennings D."/>
            <person name="Kraft C.L."/>
            <person name="Nguyen T."/>
            <person name="Pfannkoch C.M."/>
            <person name="Sitter C."/>
            <person name="Sutton G.G."/>
            <person name="Venter J.C."/>
            <person name="Woodage T."/>
            <person name="Smith D."/>
            <person name="Lee H.-M."/>
            <person name="Gustafson E."/>
            <person name="Cahill P."/>
            <person name="Kana A."/>
            <person name="Doucette-Stamm L."/>
            <person name="Weinstock K."/>
            <person name="Fechtel K."/>
            <person name="Weiss R.B."/>
            <person name="Dunn D.M."/>
            <person name="Green E.D."/>
            <person name="Blakesley R.W."/>
            <person name="Bouffard G.G."/>
            <person name="De Jong P.J."/>
            <person name="Osoegawa K."/>
            <person name="Zhu B."/>
            <person name="Marra M."/>
            <person name="Schein J."/>
            <person name="Bosdet I."/>
            <person name="Fjell C."/>
            <person name="Jones S."/>
            <person name="Krzywinski M."/>
            <person name="Mathewson C."/>
            <person name="Siddiqui A."/>
            <person name="Wye N."/>
            <person name="McPherson J."/>
            <person name="Zhao S."/>
            <person name="Fraser C.M."/>
            <person name="Shetty J."/>
            <person name="Shatsman S."/>
            <person name="Geer K."/>
            <person name="Chen Y."/>
            <person name="Abramzon S."/>
            <person name="Nierman W.C."/>
            <person name="Havlak P.H."/>
            <person name="Chen R."/>
            <person name="Durbin K.J."/>
            <person name="Egan A."/>
            <person name="Ren Y."/>
            <person name="Song X.-Z."/>
            <person name="Li B."/>
            <person name="Liu Y."/>
            <person name="Qin X."/>
            <person name="Cawley S."/>
            <person name="Cooney A.J."/>
            <person name="D'Souza L.M."/>
            <person name="Martin K."/>
            <person name="Wu J.Q."/>
            <person name="Gonzalez-Garay M.L."/>
            <person name="Jackson A.R."/>
            <person name="Kalafus K.J."/>
            <person name="McLeod M.P."/>
            <person name="Milosavljevic A."/>
            <person name="Virk D."/>
            <person name="Volkov A."/>
            <person name="Wheeler D.A."/>
            <person name="Zhang Z."/>
            <person name="Bailey J.A."/>
            <person name="Eichler E.E."/>
            <person name="Tuzun E."/>
            <person name="Birney E."/>
            <person name="Mongin E."/>
            <person name="Ureta-Vidal A."/>
            <person name="Woodwark C."/>
            <person name="Zdobnov E."/>
            <person name="Bork P."/>
            <person name="Suyama M."/>
            <person name="Torrents D."/>
            <person name="Alexandersson M."/>
            <person name="Trask B.J."/>
            <person name="Young J.M."/>
            <person name="Huang H."/>
            <person name="Wang H."/>
            <person name="Xing H."/>
            <person name="Daniels S."/>
            <person name="Gietzen D."/>
            <person name="Schmidt J."/>
            <person name="Stevens K."/>
            <person name="Vitt U."/>
            <person name="Wingrove J."/>
            <person name="Camara F."/>
            <person name="Mar Alba M."/>
            <person name="Abril J.F."/>
            <person name="Guigo R."/>
            <person name="Smit A."/>
            <person name="Dubchak I."/>
            <person name="Rubin E.M."/>
            <person name="Couronne O."/>
            <person name="Poliakov A."/>
            <person name="Huebner N."/>
            <person name="Ganten D."/>
            <person name="Goesele C."/>
            <person name="Hummel O."/>
            <person name="Kreitler T."/>
            <person name="Lee Y.-A."/>
            <person name="Monti J."/>
            <person name="Schulz H."/>
            <person name="Zimdahl H."/>
            <person name="Himmelbauer H."/>
            <person name="Lehrach H."/>
            <person name="Jacob H.J."/>
            <person name="Bromberg S."/>
            <person name="Gullings-Handley J."/>
            <person name="Jensen-Seaman M.I."/>
            <person name="Kwitek A.E."/>
            <person name="Lazar J."/>
            <person name="Pasko D."/>
            <person name="Tonellato P.J."/>
            <person name="Twigger S."/>
            <person name="Ponting C.P."/>
            <person name="Duarte J.M."/>
            <person name="Rice S."/>
            <person name="Goodstadt L."/>
            <person name="Beatson S.A."/>
            <person name="Emes R.D."/>
            <person name="Winter E.E."/>
            <person name="Webber C."/>
            <person name="Brandt P."/>
            <person name="Nyakatura G."/>
            <person name="Adetobi M."/>
            <person name="Chiaromonte F."/>
            <person name="Elnitski L."/>
            <person name="Eswara P."/>
            <person name="Hardison R.C."/>
            <person name="Hou M."/>
            <person name="Kolbe D."/>
            <person name="Makova K."/>
            <person name="Miller W."/>
            <person name="Nekrutenko A."/>
            <person name="Riemer C."/>
            <person name="Schwartz S."/>
            <person name="Taylor J."/>
            <person name="Yang S."/>
            <person name="Zhang Y."/>
            <person name="Lindpaintner K."/>
            <person name="Andrews T.D."/>
            <person name="Caccamo M."/>
            <person name="Clamp M."/>
            <person name="Clarke L."/>
            <person name="Curwen V."/>
            <person name="Durbin R.M."/>
            <person name="Eyras E."/>
            <person name="Searle S.M."/>
            <person name="Cooper G.M."/>
            <person name="Batzoglou S."/>
            <person name="Brudno M."/>
            <person name="Sidow A."/>
            <person name="Stone E.A."/>
            <person name="Payseur B.A."/>
            <person name="Bourque G."/>
            <person name="Lopez-Otin C."/>
            <person name="Puente X.S."/>
            <person name="Chakrabarti K."/>
            <person name="Chatterji S."/>
            <person name="Dewey C."/>
            <person name="Pachter L."/>
            <person name="Bray N."/>
            <person name="Yap V.B."/>
            <person name="Caspi A."/>
            <person name="Tesler G."/>
            <person name="Pevzner P.A."/>
            <person name="Haussler D."/>
            <person name="Roskin K.M."/>
            <person name="Baertsch R."/>
            <person name="Clawson H."/>
            <person name="Furey T.S."/>
            <person name="Hinrichs A.S."/>
            <person name="Karolchik D."/>
            <person name="Kent W.J."/>
            <person name="Rosenbloom K.R."/>
            <person name="Trumbower H."/>
            <person name="Weirauch M."/>
            <person name="Cooper D.N."/>
            <person name="Stenson P.D."/>
            <person name="Ma B."/>
            <person name="Brent M."/>
            <person name="Arumugam M."/>
            <person name="Shteynberg D."/>
            <person name="Copley R.R."/>
            <person name="Taylor M.S."/>
            <person name="Riethman H."/>
            <person name="Mudunuri U."/>
            <person name="Peterson J."/>
            <person name="Guyer M."/>
            <person name="Felsenfeld A."/>
            <person name="Old S."/>
            <person name="Mockrin S."/>
            <person name="Collins F.S."/>
        </authorList>
    </citation>
    <scope>NUCLEOTIDE SEQUENCE [LARGE SCALE GENOMIC DNA]</scope>
    <source>
        <strain>Brown Norway</strain>
    </source>
</reference>
<reference key="2">
    <citation type="submission" date="2005-09" db="EMBL/GenBank/DDBJ databases">
        <authorList>
            <person name="Mural R.J."/>
            <person name="Adams M.D."/>
            <person name="Myers E.W."/>
            <person name="Smith H.O."/>
            <person name="Venter J.C."/>
        </authorList>
    </citation>
    <scope>NUCLEOTIDE SEQUENCE [LARGE SCALE GENOMIC DNA]</scope>
    <source>
        <strain>Brown Norway</strain>
    </source>
</reference>
<reference key="3">
    <citation type="journal article" date="2011" name="Nat. Med.">
        <title>Death receptor 6 negatively regulates oligodendrocyte survival, maturation and myelination.</title>
        <authorList>
            <person name="Mi S."/>
            <person name="Lee X."/>
            <person name="Hu Y."/>
            <person name="Ji B."/>
            <person name="Shao Z."/>
            <person name="Yang W."/>
            <person name="Huang G."/>
            <person name="Walus L."/>
            <person name="Rhodes K."/>
            <person name="Gong B.J."/>
            <person name="Miller R.H."/>
            <person name="Pepinsky R.B."/>
        </authorList>
    </citation>
    <scope>FUNCTION</scope>
    <scope>DEVELOPMENTAL STAGE</scope>
    <scope>TISSUE SPECIFICITY</scope>
</reference>